<proteinExistence type="inferred from homology"/>
<feature type="signal peptide" evidence="2">
    <location>
        <begin position="1"/>
        <end position="22"/>
    </location>
</feature>
<feature type="chain" id="PRO_0000036224" description="Putative outer membrane protein assembly factor BamD">
    <location>
        <begin position="23"/>
        <end position="306"/>
    </location>
</feature>
<reference key="1">
    <citation type="journal article" date="1998" name="Nature">
        <title>The complete genome of the hyperthermophilic bacterium Aquifex aeolicus.</title>
        <authorList>
            <person name="Deckert G."/>
            <person name="Warren P.V."/>
            <person name="Gaasterland T."/>
            <person name="Young W.G."/>
            <person name="Lenox A.L."/>
            <person name="Graham D.E."/>
            <person name="Overbeek R."/>
            <person name="Snead M.A."/>
            <person name="Keller M."/>
            <person name="Aujay M."/>
            <person name="Huber R."/>
            <person name="Feldman R.A."/>
            <person name="Short J.M."/>
            <person name="Olsen G.J."/>
            <person name="Swanson R.V."/>
        </authorList>
    </citation>
    <scope>NUCLEOTIDE SEQUENCE [LARGE SCALE GENOMIC DNA]</scope>
    <source>
        <strain>VF5</strain>
    </source>
</reference>
<evidence type="ECO:0000250" key="1"/>
<evidence type="ECO:0000255" key="2"/>
<evidence type="ECO:0000305" key="3"/>
<accession>O67310</accession>
<dbReference type="EMBL" id="AE000657">
    <property type="protein sequence ID" value="AAC07276.1"/>
    <property type="molecule type" value="Genomic_DNA"/>
</dbReference>
<dbReference type="PIR" id="C70410">
    <property type="entry name" value="C70410"/>
</dbReference>
<dbReference type="RefSeq" id="NP_213874.1">
    <property type="nucleotide sequence ID" value="NC_000918.1"/>
</dbReference>
<dbReference type="RefSeq" id="WP_010880812.1">
    <property type="nucleotide sequence ID" value="NC_000918.1"/>
</dbReference>
<dbReference type="SMR" id="O67310"/>
<dbReference type="STRING" id="224324.aq_1273"/>
<dbReference type="EnsemblBacteria" id="AAC07276">
    <property type="protein sequence ID" value="AAC07276"/>
    <property type="gene ID" value="aq_1273"/>
</dbReference>
<dbReference type="KEGG" id="aae:aq_1273"/>
<dbReference type="PATRIC" id="fig|224324.8.peg.995"/>
<dbReference type="eggNOG" id="COG4105">
    <property type="taxonomic scope" value="Bacteria"/>
</dbReference>
<dbReference type="HOGENOM" id="CLU_902478_0_0_0"/>
<dbReference type="InParanoid" id="O67310"/>
<dbReference type="OrthoDB" id="11267at2"/>
<dbReference type="Proteomes" id="UP000000798">
    <property type="component" value="Chromosome"/>
</dbReference>
<dbReference type="GO" id="GO:0009279">
    <property type="term" value="C:cell outer membrane"/>
    <property type="evidence" value="ECO:0007669"/>
    <property type="project" value="UniProtKB-SubCell"/>
</dbReference>
<dbReference type="CDD" id="cd15830">
    <property type="entry name" value="BamD"/>
    <property type="match status" value="1"/>
</dbReference>
<dbReference type="Gene3D" id="1.25.40.10">
    <property type="entry name" value="Tetratricopeptide repeat domain"/>
    <property type="match status" value="1"/>
</dbReference>
<dbReference type="InterPro" id="IPR017689">
    <property type="entry name" value="BamD"/>
</dbReference>
<dbReference type="InterPro" id="IPR039565">
    <property type="entry name" value="BamD-like"/>
</dbReference>
<dbReference type="InterPro" id="IPR011990">
    <property type="entry name" value="TPR-like_helical_dom_sf"/>
</dbReference>
<dbReference type="NCBIfam" id="TIGR03302">
    <property type="entry name" value="OM_YfiO"/>
    <property type="match status" value="1"/>
</dbReference>
<dbReference type="Pfam" id="PF13525">
    <property type="entry name" value="YfiO"/>
    <property type="match status" value="1"/>
</dbReference>
<dbReference type="SUPFAM" id="SSF48452">
    <property type="entry name" value="TPR-like"/>
    <property type="match status" value="1"/>
</dbReference>
<comment type="function">
    <text evidence="1">Part of the outer membrane protein assembly complex, which is involved in assembly and insertion of beta-barrel proteins into the outer membrane.</text>
</comment>
<comment type="subunit">
    <text evidence="1">Part of the Bam complex.</text>
</comment>
<comment type="subcellular location">
    <subcellularLocation>
        <location evidence="1">Cell outer membrane</location>
    </subcellularLocation>
</comment>
<comment type="similarity">
    <text evidence="3">Belongs to the BamD family.</text>
</comment>
<protein>
    <recommendedName>
        <fullName>Putative outer membrane protein assembly factor BamD</fullName>
    </recommendedName>
</protein>
<sequence>MGRTFRLLSALLLGLLLINACAPKSEARRAGYAKEFYEKGLSEYRKGDYGDAKSNFEKALNYLEHLTPEQIKKVKYLLVKSAYKDKDYVDAVVYAEDFLANYPGSKEAEEVFYILVDSLVKVAPDPYRDQTYTVEAIRKAKEFLAKYPDSRFTRKVEEVIEEANKKLAYHEYYIAKFYEEYGYPYNAAIRYREVLINFPEYFSEERLAYKYIKNLLLTPKQVKREREKLEDFIEEAKEKLEEVKSPEEKKAIENRIKFLEGEVKRWEKIKEEAFKEAERALQRYREVYGENAYYKELLKLMKKWKS</sequence>
<organism>
    <name type="scientific">Aquifex aeolicus (strain VF5)</name>
    <dbReference type="NCBI Taxonomy" id="224324"/>
    <lineage>
        <taxon>Bacteria</taxon>
        <taxon>Pseudomonadati</taxon>
        <taxon>Aquificota</taxon>
        <taxon>Aquificia</taxon>
        <taxon>Aquificales</taxon>
        <taxon>Aquificaceae</taxon>
        <taxon>Aquifex</taxon>
    </lineage>
</organism>
<keyword id="KW-0998">Cell outer membrane</keyword>
<keyword id="KW-0472">Membrane</keyword>
<keyword id="KW-1185">Reference proteome</keyword>
<keyword id="KW-0732">Signal</keyword>
<gene>
    <name type="primary">bamD</name>
    <name type="ordered locus">aq_1273</name>
</gene>
<name>BAMD_AQUAE</name>